<organism>
    <name type="scientific">Escherichia coli (strain 55989 / EAEC)</name>
    <dbReference type="NCBI Taxonomy" id="585055"/>
    <lineage>
        <taxon>Bacteria</taxon>
        <taxon>Pseudomonadati</taxon>
        <taxon>Pseudomonadota</taxon>
        <taxon>Gammaproteobacteria</taxon>
        <taxon>Enterobacterales</taxon>
        <taxon>Enterobacteriaceae</taxon>
        <taxon>Escherichia</taxon>
    </lineage>
</organism>
<evidence type="ECO:0000255" key="1">
    <source>
        <dbReference type="HAMAP-Rule" id="MF_01310"/>
    </source>
</evidence>
<evidence type="ECO:0000305" key="2"/>
<name>RS11_ECO55</name>
<comment type="function">
    <text evidence="1">Located on the platform of the 30S subunit, it bridges several disparate RNA helices of the 16S rRNA. Forms part of the Shine-Dalgarno cleft in the 70S ribosome.</text>
</comment>
<comment type="subunit">
    <text evidence="1">Part of the 30S ribosomal subunit. Interacts with proteins S7 and S18. Binds to IF-3.</text>
</comment>
<comment type="similarity">
    <text evidence="1">Belongs to the universal ribosomal protein uS11 family.</text>
</comment>
<reference key="1">
    <citation type="journal article" date="2009" name="PLoS Genet.">
        <title>Organised genome dynamics in the Escherichia coli species results in highly diverse adaptive paths.</title>
        <authorList>
            <person name="Touchon M."/>
            <person name="Hoede C."/>
            <person name="Tenaillon O."/>
            <person name="Barbe V."/>
            <person name="Baeriswyl S."/>
            <person name="Bidet P."/>
            <person name="Bingen E."/>
            <person name="Bonacorsi S."/>
            <person name="Bouchier C."/>
            <person name="Bouvet O."/>
            <person name="Calteau A."/>
            <person name="Chiapello H."/>
            <person name="Clermont O."/>
            <person name="Cruveiller S."/>
            <person name="Danchin A."/>
            <person name="Diard M."/>
            <person name="Dossat C."/>
            <person name="Karoui M.E."/>
            <person name="Frapy E."/>
            <person name="Garry L."/>
            <person name="Ghigo J.M."/>
            <person name="Gilles A.M."/>
            <person name="Johnson J."/>
            <person name="Le Bouguenec C."/>
            <person name="Lescat M."/>
            <person name="Mangenot S."/>
            <person name="Martinez-Jehanne V."/>
            <person name="Matic I."/>
            <person name="Nassif X."/>
            <person name="Oztas S."/>
            <person name="Petit M.A."/>
            <person name="Pichon C."/>
            <person name="Rouy Z."/>
            <person name="Ruf C.S."/>
            <person name="Schneider D."/>
            <person name="Tourret J."/>
            <person name="Vacherie B."/>
            <person name="Vallenet D."/>
            <person name="Medigue C."/>
            <person name="Rocha E.P.C."/>
            <person name="Denamur E."/>
        </authorList>
    </citation>
    <scope>NUCLEOTIDE SEQUENCE [LARGE SCALE GENOMIC DNA]</scope>
    <source>
        <strain>55989 / EAEC</strain>
    </source>
</reference>
<proteinExistence type="inferred from homology"/>
<gene>
    <name evidence="1" type="primary">rpsK</name>
    <name type="ordered locus">EC55989_3714</name>
</gene>
<keyword id="KW-1185">Reference proteome</keyword>
<keyword id="KW-0687">Ribonucleoprotein</keyword>
<keyword id="KW-0689">Ribosomal protein</keyword>
<keyword id="KW-0694">RNA-binding</keyword>
<keyword id="KW-0699">rRNA-binding</keyword>
<dbReference type="EMBL" id="CU928145">
    <property type="protein sequence ID" value="CAV00000.1"/>
    <property type="molecule type" value="Genomic_DNA"/>
</dbReference>
<dbReference type="RefSeq" id="WP_001029684.1">
    <property type="nucleotide sequence ID" value="NC_011748.1"/>
</dbReference>
<dbReference type="SMR" id="B7LHZ9"/>
<dbReference type="GeneID" id="93778690"/>
<dbReference type="KEGG" id="eck:EC55989_3714"/>
<dbReference type="HOGENOM" id="CLU_072439_5_0_6"/>
<dbReference type="Proteomes" id="UP000000746">
    <property type="component" value="Chromosome"/>
</dbReference>
<dbReference type="GO" id="GO:1990904">
    <property type="term" value="C:ribonucleoprotein complex"/>
    <property type="evidence" value="ECO:0007669"/>
    <property type="project" value="UniProtKB-KW"/>
</dbReference>
<dbReference type="GO" id="GO:0005840">
    <property type="term" value="C:ribosome"/>
    <property type="evidence" value="ECO:0007669"/>
    <property type="project" value="UniProtKB-KW"/>
</dbReference>
<dbReference type="GO" id="GO:0019843">
    <property type="term" value="F:rRNA binding"/>
    <property type="evidence" value="ECO:0007669"/>
    <property type="project" value="UniProtKB-UniRule"/>
</dbReference>
<dbReference type="GO" id="GO:0003735">
    <property type="term" value="F:structural constituent of ribosome"/>
    <property type="evidence" value="ECO:0007669"/>
    <property type="project" value="InterPro"/>
</dbReference>
<dbReference type="GO" id="GO:0006412">
    <property type="term" value="P:translation"/>
    <property type="evidence" value="ECO:0007669"/>
    <property type="project" value="UniProtKB-UniRule"/>
</dbReference>
<dbReference type="FunFam" id="3.30.420.80:FF:000001">
    <property type="entry name" value="30S ribosomal protein S11"/>
    <property type="match status" value="1"/>
</dbReference>
<dbReference type="Gene3D" id="3.30.420.80">
    <property type="entry name" value="Ribosomal protein S11"/>
    <property type="match status" value="1"/>
</dbReference>
<dbReference type="HAMAP" id="MF_01310">
    <property type="entry name" value="Ribosomal_uS11"/>
    <property type="match status" value="1"/>
</dbReference>
<dbReference type="InterPro" id="IPR001971">
    <property type="entry name" value="Ribosomal_uS11"/>
</dbReference>
<dbReference type="InterPro" id="IPR019981">
    <property type="entry name" value="Ribosomal_uS11_bac-type"/>
</dbReference>
<dbReference type="InterPro" id="IPR018102">
    <property type="entry name" value="Ribosomal_uS11_CS"/>
</dbReference>
<dbReference type="InterPro" id="IPR036967">
    <property type="entry name" value="Ribosomal_uS11_sf"/>
</dbReference>
<dbReference type="NCBIfam" id="NF003698">
    <property type="entry name" value="PRK05309.1"/>
    <property type="match status" value="1"/>
</dbReference>
<dbReference type="NCBIfam" id="TIGR03632">
    <property type="entry name" value="uS11_bact"/>
    <property type="match status" value="1"/>
</dbReference>
<dbReference type="PANTHER" id="PTHR11759">
    <property type="entry name" value="40S RIBOSOMAL PROTEIN S14/30S RIBOSOMAL PROTEIN S11"/>
    <property type="match status" value="1"/>
</dbReference>
<dbReference type="Pfam" id="PF00411">
    <property type="entry name" value="Ribosomal_S11"/>
    <property type="match status" value="1"/>
</dbReference>
<dbReference type="PIRSF" id="PIRSF002131">
    <property type="entry name" value="Ribosomal_S11"/>
    <property type="match status" value="1"/>
</dbReference>
<dbReference type="SUPFAM" id="SSF53137">
    <property type="entry name" value="Translational machinery components"/>
    <property type="match status" value="1"/>
</dbReference>
<dbReference type="PROSITE" id="PS00054">
    <property type="entry name" value="RIBOSOMAL_S11"/>
    <property type="match status" value="1"/>
</dbReference>
<feature type="chain" id="PRO_1000165548" description="Small ribosomal subunit protein uS11">
    <location>
        <begin position="1"/>
        <end position="129"/>
    </location>
</feature>
<sequence length="129" mass="13845">MAKAPIRARKRVRKQVSDGVAHIHASFNNTIVTITDRQGNALGWATAGGSGFRGSRKSTPFAAQVAAERCADAVKEYGIKNLEVMVKGPGPGRESTIRALNAAGFRITNITDVTPIPHNGCRPPKKRRV</sequence>
<accession>B7LHZ9</accession>
<protein>
    <recommendedName>
        <fullName evidence="1">Small ribosomal subunit protein uS11</fullName>
    </recommendedName>
    <alternativeName>
        <fullName evidence="2">30S ribosomal protein S11</fullName>
    </alternativeName>
</protein>